<comment type="function">
    <text evidence="4">Initiates complex N-linked carbohydrate formation. Essential for the conversion of high-mannose to hybrid and complex N-glycans.</text>
</comment>
<comment type="catalytic activity">
    <reaction evidence="4">
        <text>N(4)-(alpha-D-Man-(1-&gt;3)-[alpha-D-Man-(1-&gt;3)-[alpha-D-Man-(1-&gt;6)]-alpha-D-Man-(1-&gt;6)]-beta-D-Man-(1-&gt;4)-beta-D-GlcNAc-(1-&gt;4)-beta-D-GlcNAc)-L-asparaginyl-[protein] (N-glucan mannose isomer 5A1,2) + UDP-N-acetyl-alpha-D-glucosamine = N(4)-{beta-D-GlcNAc-(1-&gt;2)-alpha-D-Man-(1-&gt;3)-[alpha-D-Man-(1-&gt;3)-[alpha-D-Man-(1-&gt;6)]-alpha-D-Man-(1-&gt;6)]-beta-D-Man-(1-&gt;4)-beta-D-GlcNAc-(1-&gt;4)-beta-D-GlcNAc}-L-asparaginyl-[protein] + UDP + H(+)</text>
        <dbReference type="Rhea" id="RHEA:11456"/>
        <dbReference type="Rhea" id="RHEA-COMP:14367"/>
        <dbReference type="Rhea" id="RHEA-COMP:14368"/>
        <dbReference type="ChEBI" id="CHEBI:15378"/>
        <dbReference type="ChEBI" id="CHEBI:57705"/>
        <dbReference type="ChEBI" id="CHEBI:58223"/>
        <dbReference type="ChEBI" id="CHEBI:59087"/>
        <dbReference type="ChEBI" id="CHEBI:60625"/>
        <dbReference type="EC" id="2.4.1.101"/>
    </reaction>
</comment>
<comment type="cofactor">
    <cofactor evidence="1">
        <name>Mn(2+)</name>
        <dbReference type="ChEBI" id="CHEBI:29035"/>
    </cofactor>
    <text evidence="2">The cofactor is mostly bound to the substrate.</text>
</comment>
<comment type="pathway">
    <text evidence="4">Protein modification; protein glycosylation.</text>
</comment>
<comment type="subunit">
    <text evidence="1 6">Interacts with MGAT4D. Interacts with BRI3 (By similarity).</text>
</comment>
<comment type="subcellular location">
    <subcellularLocation>
        <location evidence="1">Golgi apparatus membrane</location>
        <topology evidence="1">Single-pass type II membrane protein</topology>
    </subcellularLocation>
    <subcellularLocation>
        <location evidence="1">Cytoplasm</location>
        <location evidence="1">Perinuclear region</location>
    </subcellularLocation>
    <text evidence="1">Co-localizes with BRI3 at the perinuclear region.</text>
</comment>
<comment type="tissue specificity">
    <text evidence="5">Detected in kidney, liver and brain.</text>
</comment>
<comment type="similarity">
    <text evidence="7">Belongs to the glycosyltransferase 13 family.</text>
</comment>
<comment type="online information" name="Functional Glycomics Gateway - GTase">
    <link uri="http://www.functionalglycomics.org/glycomics/molecule/jsp/glycoEnzyme/viewGlycoEnzyme.jsp?gbpId=gt_mou_583"/>
    <text>alpha-1,3-mannosyl-glycoprotein beta 1,2-GlcNAc T I (Mgat1)</text>
</comment>
<dbReference type="EC" id="2.4.1.101" evidence="4"/>
<dbReference type="EMBL" id="M73491">
    <property type="protein sequence ID" value="AAA37698.1"/>
    <property type="molecule type" value="Genomic_DNA"/>
</dbReference>
<dbReference type="EMBL" id="L07037">
    <property type="protein sequence ID" value="AAA40478.1"/>
    <property type="molecule type" value="mRNA"/>
</dbReference>
<dbReference type="EMBL" id="AK087959">
    <property type="protein sequence ID" value="BAC40058.1"/>
    <property type="molecule type" value="mRNA"/>
</dbReference>
<dbReference type="EMBL" id="BC006629">
    <property type="protein sequence ID" value="AAH06629.1"/>
    <property type="molecule type" value="mRNA"/>
</dbReference>
<dbReference type="CCDS" id="CCDS24602.1"/>
<dbReference type="PIR" id="A42500">
    <property type="entry name" value="A42500"/>
</dbReference>
<dbReference type="RefSeq" id="NP_001103618.1">
    <property type="nucleotide sequence ID" value="NM_001110148.1"/>
</dbReference>
<dbReference type="RefSeq" id="NP_001103619.1">
    <property type="nucleotide sequence ID" value="NM_001110149.1"/>
</dbReference>
<dbReference type="RefSeq" id="NP_001103620.1">
    <property type="nucleotide sequence ID" value="NM_001110150.1"/>
</dbReference>
<dbReference type="RefSeq" id="NP_034924.3">
    <property type="nucleotide sequence ID" value="NM_010794.3"/>
</dbReference>
<dbReference type="RefSeq" id="XP_006532460.1">
    <property type="nucleotide sequence ID" value="XM_006532397.3"/>
</dbReference>
<dbReference type="RefSeq" id="XP_006532461.1">
    <property type="nucleotide sequence ID" value="XM_006532398.5"/>
</dbReference>
<dbReference type="RefSeq" id="XP_006532462.1">
    <property type="nucleotide sequence ID" value="XM_006532399.3"/>
</dbReference>
<dbReference type="RefSeq" id="XP_006532463.1">
    <property type="nucleotide sequence ID" value="XM_006532400.5"/>
</dbReference>
<dbReference type="RefSeq" id="XP_017169803.1">
    <property type="nucleotide sequence ID" value="XM_017314314.1"/>
</dbReference>
<dbReference type="RefSeq" id="XP_030101489.1">
    <property type="nucleotide sequence ID" value="XM_030245629.1"/>
</dbReference>
<dbReference type="RefSeq" id="XP_030101490.1">
    <property type="nucleotide sequence ID" value="XM_030245630.2"/>
</dbReference>
<dbReference type="RefSeq" id="XP_036012268.1">
    <property type="nucleotide sequence ID" value="XM_036156375.1"/>
</dbReference>
<dbReference type="RefSeq" id="XP_036012269.1">
    <property type="nucleotide sequence ID" value="XM_036156376.1"/>
</dbReference>
<dbReference type="SMR" id="P27808"/>
<dbReference type="BioGRID" id="201410">
    <property type="interactions" value="3"/>
</dbReference>
<dbReference type="FunCoup" id="P27808">
    <property type="interactions" value="1808"/>
</dbReference>
<dbReference type="STRING" id="10090.ENSMUSP00000126303"/>
<dbReference type="BindingDB" id="P27808"/>
<dbReference type="ChEMBL" id="CHEMBL4524036"/>
<dbReference type="CAZy" id="GT13">
    <property type="family name" value="Glycosyltransferase Family 13"/>
</dbReference>
<dbReference type="GlyGen" id="P27808">
    <property type="glycosylation" value="1 site"/>
</dbReference>
<dbReference type="iPTMnet" id="P27808"/>
<dbReference type="PhosphoSitePlus" id="P27808"/>
<dbReference type="PaxDb" id="10090-ENSMUSP00000080484"/>
<dbReference type="PeptideAtlas" id="P27808"/>
<dbReference type="ProteomicsDB" id="292316"/>
<dbReference type="Pumba" id="P27808"/>
<dbReference type="Antibodypedia" id="17878">
    <property type="antibodies" value="279 antibodies from 31 providers"/>
</dbReference>
<dbReference type="DNASU" id="17308"/>
<dbReference type="Ensembl" id="ENSMUST00000081794.7">
    <property type="protein sequence ID" value="ENSMUSP00000080484.7"/>
    <property type="gene ID" value="ENSMUSG00000020346.17"/>
</dbReference>
<dbReference type="Ensembl" id="ENSMUST00000101293.11">
    <property type="protein sequence ID" value="ENSMUSP00000098851.5"/>
    <property type="gene ID" value="ENSMUSG00000020346.17"/>
</dbReference>
<dbReference type="Ensembl" id="ENSMUST00000109194.2">
    <property type="protein sequence ID" value="ENSMUSP00000104817.2"/>
    <property type="gene ID" value="ENSMUSG00000020346.17"/>
</dbReference>
<dbReference type="Ensembl" id="ENSMUST00000167400.8">
    <property type="protein sequence ID" value="ENSMUSP00000126303.2"/>
    <property type="gene ID" value="ENSMUSG00000020346.17"/>
</dbReference>
<dbReference type="GeneID" id="17308"/>
<dbReference type="KEGG" id="mmu:17308"/>
<dbReference type="UCSC" id="uc007iqb.2">
    <property type="organism name" value="mouse"/>
</dbReference>
<dbReference type="AGR" id="MGI:96973"/>
<dbReference type="CTD" id="4245"/>
<dbReference type="MGI" id="MGI:96973">
    <property type="gene designation" value="Mgat1"/>
</dbReference>
<dbReference type="VEuPathDB" id="HostDB:ENSMUSG00000020346"/>
<dbReference type="eggNOG" id="KOG1413">
    <property type="taxonomic scope" value="Eukaryota"/>
</dbReference>
<dbReference type="GeneTree" id="ENSGT00530000063632"/>
<dbReference type="HOGENOM" id="CLU_022150_0_0_1"/>
<dbReference type="InParanoid" id="P27808"/>
<dbReference type="OMA" id="KGYDLSW"/>
<dbReference type="OrthoDB" id="440755at2759"/>
<dbReference type="PhylomeDB" id="P27808"/>
<dbReference type="TreeFam" id="TF320555"/>
<dbReference type="Reactome" id="R-MMU-964739">
    <property type="pathway name" value="N-glycan trimming and elongation in the cis-Golgi"/>
</dbReference>
<dbReference type="UniPathway" id="UPA00378"/>
<dbReference type="BioGRID-ORCS" id="17308">
    <property type="hits" value="24 hits in 74 CRISPR screens"/>
</dbReference>
<dbReference type="ChiTaRS" id="Mgat1">
    <property type="organism name" value="mouse"/>
</dbReference>
<dbReference type="PRO" id="PR:P27808"/>
<dbReference type="Proteomes" id="UP000000589">
    <property type="component" value="Chromosome 11"/>
</dbReference>
<dbReference type="RNAct" id="P27808">
    <property type="molecule type" value="protein"/>
</dbReference>
<dbReference type="Bgee" id="ENSMUSG00000020346">
    <property type="expression patterns" value="Expressed in retinal neural layer and 250 other cell types or tissues"/>
</dbReference>
<dbReference type="ExpressionAtlas" id="P27808">
    <property type="expression patterns" value="baseline and differential"/>
</dbReference>
<dbReference type="GO" id="GO:0000139">
    <property type="term" value="C:Golgi membrane"/>
    <property type="evidence" value="ECO:0000250"/>
    <property type="project" value="UniProtKB"/>
</dbReference>
<dbReference type="GO" id="GO:0048471">
    <property type="term" value="C:perinuclear region of cytoplasm"/>
    <property type="evidence" value="ECO:0007669"/>
    <property type="project" value="UniProtKB-SubCell"/>
</dbReference>
<dbReference type="GO" id="GO:0008375">
    <property type="term" value="F:acetylglucosaminyltransferase activity"/>
    <property type="evidence" value="ECO:0000314"/>
    <property type="project" value="MGI"/>
</dbReference>
<dbReference type="GO" id="GO:0003827">
    <property type="term" value="F:alpha-1,3-mannosylglycoprotein 2-beta-N-acetylglucosaminyltransferase activity"/>
    <property type="evidence" value="ECO:0000250"/>
    <property type="project" value="UniProtKB"/>
</dbReference>
<dbReference type="GO" id="GO:0030145">
    <property type="term" value="F:manganese ion binding"/>
    <property type="evidence" value="ECO:0000250"/>
    <property type="project" value="UniProtKB"/>
</dbReference>
<dbReference type="GO" id="GO:0001701">
    <property type="term" value="P:in utero embryonic development"/>
    <property type="evidence" value="ECO:0000315"/>
    <property type="project" value="MGI"/>
</dbReference>
<dbReference type="GO" id="GO:0018279">
    <property type="term" value="P:protein N-linked glycosylation via asparagine"/>
    <property type="evidence" value="ECO:0000250"/>
    <property type="project" value="UniProtKB"/>
</dbReference>
<dbReference type="GO" id="GO:0006049">
    <property type="term" value="P:UDP-N-acetylglucosamine catabolic process"/>
    <property type="evidence" value="ECO:0000314"/>
    <property type="project" value="MGI"/>
</dbReference>
<dbReference type="CDD" id="cd02514">
    <property type="entry name" value="GT13_GLCNAC-TI"/>
    <property type="match status" value="1"/>
</dbReference>
<dbReference type="FunFam" id="3.90.550.10:FF:000055">
    <property type="entry name" value="Alpha-1,3-mannosyl-glycoprotein 2-beta-N-acetylglucosaminyltransferase"/>
    <property type="match status" value="1"/>
</dbReference>
<dbReference type="FunFam" id="3.10.180.20:FF:000001">
    <property type="entry name" value="alpha-1,3-mannosyl-glycoprotein 2-beta-N-acetylglucosaminyltransferase"/>
    <property type="match status" value="1"/>
</dbReference>
<dbReference type="Gene3D" id="3.10.180.20">
    <property type="entry name" value="N-Acetylglucosaminyltransferase I, Domain 2"/>
    <property type="match status" value="1"/>
</dbReference>
<dbReference type="Gene3D" id="3.90.550.10">
    <property type="entry name" value="Spore Coat Polysaccharide Biosynthesis Protein SpsA, Chain A"/>
    <property type="match status" value="1"/>
</dbReference>
<dbReference type="InterPro" id="IPR004139">
    <property type="entry name" value="Glyco_trans_13"/>
</dbReference>
<dbReference type="InterPro" id="IPR052261">
    <property type="entry name" value="Glycosyltransferase_13"/>
</dbReference>
<dbReference type="InterPro" id="IPR029044">
    <property type="entry name" value="Nucleotide-diphossugar_trans"/>
</dbReference>
<dbReference type="PANTHER" id="PTHR10468:SF0">
    <property type="entry name" value="ALPHA-1,3-MANNOSYL-GLYCOPROTEIN 2-BETA-N-ACETYLGLUCOSAMINYLTRANSFERASE"/>
    <property type="match status" value="1"/>
</dbReference>
<dbReference type="PANTHER" id="PTHR10468">
    <property type="entry name" value="PROTEIN O-LINKED-MANNOSE BETA-1,2-N-ACETYLGLUCOSAMINYLTRANSFERASE 1/ALPHA-1,3-MANNOSYL-GLYCOPROTEIN 2-BETA-N-ACETYLGLUCOSAMINYLTRANSFERASE"/>
    <property type="match status" value="1"/>
</dbReference>
<dbReference type="Pfam" id="PF03071">
    <property type="entry name" value="GNT-I"/>
    <property type="match status" value="1"/>
</dbReference>
<dbReference type="SUPFAM" id="SSF53448">
    <property type="entry name" value="Nucleotide-diphospho-sugar transferases"/>
    <property type="match status" value="1"/>
</dbReference>
<evidence type="ECO:0000250" key="1">
    <source>
        <dbReference type="UniProtKB" id="P26572"/>
    </source>
</evidence>
<evidence type="ECO:0000250" key="2">
    <source>
        <dbReference type="UniProtKB" id="P27115"/>
    </source>
</evidence>
<evidence type="ECO:0000255" key="3"/>
<evidence type="ECO:0000269" key="4">
    <source>
    </source>
</evidence>
<evidence type="ECO:0000269" key="5">
    <source>
    </source>
</evidence>
<evidence type="ECO:0000269" key="6">
    <source>
    </source>
</evidence>
<evidence type="ECO:0000305" key="7"/>
<organism>
    <name type="scientific">Mus musculus</name>
    <name type="common">Mouse</name>
    <dbReference type="NCBI Taxonomy" id="10090"/>
    <lineage>
        <taxon>Eukaryota</taxon>
        <taxon>Metazoa</taxon>
        <taxon>Chordata</taxon>
        <taxon>Craniata</taxon>
        <taxon>Vertebrata</taxon>
        <taxon>Euteleostomi</taxon>
        <taxon>Mammalia</taxon>
        <taxon>Eutheria</taxon>
        <taxon>Euarchontoglires</taxon>
        <taxon>Glires</taxon>
        <taxon>Rodentia</taxon>
        <taxon>Myomorpha</taxon>
        <taxon>Muroidea</taxon>
        <taxon>Muridae</taxon>
        <taxon>Murinae</taxon>
        <taxon>Mus</taxon>
        <taxon>Mus</taxon>
    </lineage>
</organism>
<reference key="1">
    <citation type="journal article" date="1992" name="Genomics">
        <title>Molecular cloning and characterization of the mouse UDP-N-acetylglucosamine:alpha-3-D-mannoside beta-1,2-N-acetylglucosaminyltransferase I gene.</title>
        <authorList>
            <person name="Pownall S."/>
            <person name="Kozak C.A."/>
            <person name="Schappert K.T."/>
            <person name="Sarkar M."/>
            <person name="Hull E."/>
            <person name="Schachter H."/>
            <person name="Math J.D."/>
        </authorList>
    </citation>
    <scope>NUCLEOTIDE SEQUENCE [GENOMIC DNA]</scope>
    <scope>TISSUE SPECIFICITY</scope>
</reference>
<reference key="2">
    <citation type="journal article" date="1992" name="Glycobiology">
        <title>Cloning and expression of the murine gene and chromosomal location of the human gene encoding N-acetylglucosaminyltransferase I.</title>
        <authorList>
            <person name="Kumar R."/>
            <person name="Yang J."/>
            <person name="Eddy R.L."/>
            <person name="Byers M.G."/>
            <person name="Shows T.B."/>
            <person name="Stanley P."/>
        </authorList>
    </citation>
    <scope>NUCLEOTIDE SEQUENCE [MRNA]</scope>
    <scope>FUNCTION</scope>
    <scope>CATALYTIC ACTIVITY</scope>
    <scope>PATHWAY</scope>
</reference>
<reference key="3">
    <citation type="journal article" date="2005" name="Science">
        <title>The transcriptional landscape of the mammalian genome.</title>
        <authorList>
            <person name="Carninci P."/>
            <person name="Kasukawa T."/>
            <person name="Katayama S."/>
            <person name="Gough J."/>
            <person name="Frith M.C."/>
            <person name="Maeda N."/>
            <person name="Oyama R."/>
            <person name="Ravasi T."/>
            <person name="Lenhard B."/>
            <person name="Wells C."/>
            <person name="Kodzius R."/>
            <person name="Shimokawa K."/>
            <person name="Bajic V.B."/>
            <person name="Brenner S.E."/>
            <person name="Batalov S."/>
            <person name="Forrest A.R."/>
            <person name="Zavolan M."/>
            <person name="Davis M.J."/>
            <person name="Wilming L.G."/>
            <person name="Aidinis V."/>
            <person name="Allen J.E."/>
            <person name="Ambesi-Impiombato A."/>
            <person name="Apweiler R."/>
            <person name="Aturaliya R.N."/>
            <person name="Bailey T.L."/>
            <person name="Bansal M."/>
            <person name="Baxter L."/>
            <person name="Beisel K.W."/>
            <person name="Bersano T."/>
            <person name="Bono H."/>
            <person name="Chalk A.M."/>
            <person name="Chiu K.P."/>
            <person name="Choudhary V."/>
            <person name="Christoffels A."/>
            <person name="Clutterbuck D.R."/>
            <person name="Crowe M.L."/>
            <person name="Dalla E."/>
            <person name="Dalrymple B.P."/>
            <person name="de Bono B."/>
            <person name="Della Gatta G."/>
            <person name="di Bernardo D."/>
            <person name="Down T."/>
            <person name="Engstrom P."/>
            <person name="Fagiolini M."/>
            <person name="Faulkner G."/>
            <person name="Fletcher C.F."/>
            <person name="Fukushima T."/>
            <person name="Furuno M."/>
            <person name="Futaki S."/>
            <person name="Gariboldi M."/>
            <person name="Georgii-Hemming P."/>
            <person name="Gingeras T.R."/>
            <person name="Gojobori T."/>
            <person name="Green R.E."/>
            <person name="Gustincich S."/>
            <person name="Harbers M."/>
            <person name="Hayashi Y."/>
            <person name="Hensch T.K."/>
            <person name="Hirokawa N."/>
            <person name="Hill D."/>
            <person name="Huminiecki L."/>
            <person name="Iacono M."/>
            <person name="Ikeo K."/>
            <person name="Iwama A."/>
            <person name="Ishikawa T."/>
            <person name="Jakt M."/>
            <person name="Kanapin A."/>
            <person name="Katoh M."/>
            <person name="Kawasawa Y."/>
            <person name="Kelso J."/>
            <person name="Kitamura H."/>
            <person name="Kitano H."/>
            <person name="Kollias G."/>
            <person name="Krishnan S.P."/>
            <person name="Kruger A."/>
            <person name="Kummerfeld S.K."/>
            <person name="Kurochkin I.V."/>
            <person name="Lareau L.F."/>
            <person name="Lazarevic D."/>
            <person name="Lipovich L."/>
            <person name="Liu J."/>
            <person name="Liuni S."/>
            <person name="McWilliam S."/>
            <person name="Madan Babu M."/>
            <person name="Madera M."/>
            <person name="Marchionni L."/>
            <person name="Matsuda H."/>
            <person name="Matsuzawa S."/>
            <person name="Miki H."/>
            <person name="Mignone F."/>
            <person name="Miyake S."/>
            <person name="Morris K."/>
            <person name="Mottagui-Tabar S."/>
            <person name="Mulder N."/>
            <person name="Nakano N."/>
            <person name="Nakauchi H."/>
            <person name="Ng P."/>
            <person name="Nilsson R."/>
            <person name="Nishiguchi S."/>
            <person name="Nishikawa S."/>
            <person name="Nori F."/>
            <person name="Ohara O."/>
            <person name="Okazaki Y."/>
            <person name="Orlando V."/>
            <person name="Pang K.C."/>
            <person name="Pavan W.J."/>
            <person name="Pavesi G."/>
            <person name="Pesole G."/>
            <person name="Petrovsky N."/>
            <person name="Piazza S."/>
            <person name="Reed J."/>
            <person name="Reid J.F."/>
            <person name="Ring B.Z."/>
            <person name="Ringwald M."/>
            <person name="Rost B."/>
            <person name="Ruan Y."/>
            <person name="Salzberg S.L."/>
            <person name="Sandelin A."/>
            <person name="Schneider C."/>
            <person name="Schoenbach C."/>
            <person name="Sekiguchi K."/>
            <person name="Semple C.A."/>
            <person name="Seno S."/>
            <person name="Sessa L."/>
            <person name="Sheng Y."/>
            <person name="Shibata Y."/>
            <person name="Shimada H."/>
            <person name="Shimada K."/>
            <person name="Silva D."/>
            <person name="Sinclair B."/>
            <person name="Sperling S."/>
            <person name="Stupka E."/>
            <person name="Sugiura K."/>
            <person name="Sultana R."/>
            <person name="Takenaka Y."/>
            <person name="Taki K."/>
            <person name="Tammoja K."/>
            <person name="Tan S.L."/>
            <person name="Tang S."/>
            <person name="Taylor M.S."/>
            <person name="Tegner J."/>
            <person name="Teichmann S.A."/>
            <person name="Ueda H.R."/>
            <person name="van Nimwegen E."/>
            <person name="Verardo R."/>
            <person name="Wei C.L."/>
            <person name="Yagi K."/>
            <person name="Yamanishi H."/>
            <person name="Zabarovsky E."/>
            <person name="Zhu S."/>
            <person name="Zimmer A."/>
            <person name="Hide W."/>
            <person name="Bult C."/>
            <person name="Grimmond S.M."/>
            <person name="Teasdale R.D."/>
            <person name="Liu E.T."/>
            <person name="Brusic V."/>
            <person name="Quackenbush J."/>
            <person name="Wahlestedt C."/>
            <person name="Mattick J.S."/>
            <person name="Hume D.A."/>
            <person name="Kai C."/>
            <person name="Sasaki D."/>
            <person name="Tomaru Y."/>
            <person name="Fukuda S."/>
            <person name="Kanamori-Katayama M."/>
            <person name="Suzuki M."/>
            <person name="Aoki J."/>
            <person name="Arakawa T."/>
            <person name="Iida J."/>
            <person name="Imamura K."/>
            <person name="Itoh M."/>
            <person name="Kato T."/>
            <person name="Kawaji H."/>
            <person name="Kawagashira N."/>
            <person name="Kawashima T."/>
            <person name="Kojima M."/>
            <person name="Kondo S."/>
            <person name="Konno H."/>
            <person name="Nakano K."/>
            <person name="Ninomiya N."/>
            <person name="Nishio T."/>
            <person name="Okada M."/>
            <person name="Plessy C."/>
            <person name="Shibata K."/>
            <person name="Shiraki T."/>
            <person name="Suzuki S."/>
            <person name="Tagami M."/>
            <person name="Waki K."/>
            <person name="Watahiki A."/>
            <person name="Okamura-Oho Y."/>
            <person name="Suzuki H."/>
            <person name="Kawai J."/>
            <person name="Hayashizaki Y."/>
        </authorList>
    </citation>
    <scope>NUCLEOTIDE SEQUENCE [LARGE SCALE MRNA]</scope>
    <source>
        <strain>NOD</strain>
        <tissue>Thymus</tissue>
    </source>
</reference>
<reference key="4">
    <citation type="journal article" date="2004" name="Genome Res.">
        <title>The status, quality, and expansion of the NIH full-length cDNA project: the Mammalian Gene Collection (MGC).</title>
        <authorList>
            <consortium name="The MGC Project Team"/>
        </authorList>
    </citation>
    <scope>NUCLEOTIDE SEQUENCE [LARGE SCALE MRNA]</scope>
    <source>
        <strain>FVB/N</strain>
        <tissue>Mammary gland</tissue>
    </source>
</reference>
<reference key="5">
    <citation type="journal article" date="2010" name="Cell">
        <title>A tissue-specific atlas of mouse protein phosphorylation and expression.</title>
        <authorList>
            <person name="Huttlin E.L."/>
            <person name="Jedrychowski M.P."/>
            <person name="Elias J.E."/>
            <person name="Goswami T."/>
            <person name="Rad R."/>
            <person name="Beausoleil S.A."/>
            <person name="Villen J."/>
            <person name="Haas W."/>
            <person name="Sowa M.E."/>
            <person name="Gygi S.P."/>
        </authorList>
    </citation>
    <scope>IDENTIFICATION BY MASS SPECTROMETRY [LARGE SCALE ANALYSIS]</scope>
    <source>
        <tissue>Kidney</tissue>
        <tissue>Liver</tissue>
        <tissue>Spleen</tissue>
    </source>
</reference>
<reference key="6">
    <citation type="journal article" date="2010" name="J. Cell Biol.">
        <title>A testis-specific regulator of complex and hybrid N-glycan synthesis.</title>
        <authorList>
            <person name="Huang H.H."/>
            <person name="Stanley P."/>
        </authorList>
    </citation>
    <scope>INTERACTION WITH MGAT4D</scope>
</reference>
<keyword id="KW-0963">Cytoplasm</keyword>
<keyword id="KW-1015">Disulfide bond</keyword>
<keyword id="KW-0328">Glycosyltransferase</keyword>
<keyword id="KW-0333">Golgi apparatus</keyword>
<keyword id="KW-0464">Manganese</keyword>
<keyword id="KW-0472">Membrane</keyword>
<keyword id="KW-0479">Metal-binding</keyword>
<keyword id="KW-1185">Reference proteome</keyword>
<keyword id="KW-0735">Signal-anchor</keyword>
<keyword id="KW-0808">Transferase</keyword>
<keyword id="KW-0812">Transmembrane</keyword>
<keyword id="KW-1133">Transmembrane helix</keyword>
<accession>P27808</accession>
<proteinExistence type="evidence at protein level"/>
<gene>
    <name type="primary">Mgat1</name>
    <name type="synonym">Gnt1</name>
</gene>
<sequence>MLKKQTAGLVLWGAIIFVGWNALLLLFFWTRPAPGRLPSDSALGDDPASLTREVIHLAEDAEAELERQRGLLQQIKEHYALWRQRWRVPTVAPPAWPRVPVTPSPVQIPILVIACDRSTVRRCLDKLLHYRPSAERFPIIVSQDCGHEETAQVIASYGTAVTHIRQPDLSNIAVQPDHRKFQGYYKIARHYRWALGQIFNKFKFPAAVVVEDDLEVAPDFFEYFQATYPLLRTDPSLWCVSAWNDNGKEQMVDSSKPELLYRTDFFPGLGWLLLADLWAELEPKWPKAFWDDWMRRPEQRKGRACIRPEISRTMTFGRKGVSHGQFFDQHLKFIKLNQQFVPFTQLDLSYLQQEAYDRDFLAQVYGAPQLQVEKVRTNDQKELGEVRVQYTSRDSFKAFAKALGVMDDLKSGVPRAGYRGIVTFQFRGRRVHLAPPQTWTGYDPSWN</sequence>
<name>MGAT1_MOUSE</name>
<protein>
    <recommendedName>
        <fullName>Alpha-1,3-mannosyl-glycoprotein 2-beta-N-acetylglucosaminyltransferase</fullName>
        <ecNumber evidence="4">2.4.1.101</ecNumber>
    </recommendedName>
    <alternativeName>
        <fullName>N-glycosyl-oligosaccharide-glycoprotein N-acetylglucosaminyltransferase I</fullName>
        <shortName>GNT-I</shortName>
        <shortName>GlcNAc-T I</shortName>
    </alternativeName>
</protein>
<feature type="chain" id="PRO_0000191385" description="Alpha-1,3-mannosyl-glycoprotein 2-beta-N-acetylglucosaminyltransferase">
    <location>
        <begin position="1"/>
        <end position="447"/>
    </location>
</feature>
<feature type="topological domain" description="Cytoplasmic" evidence="3">
    <location>
        <begin position="1"/>
        <end position="6"/>
    </location>
</feature>
<feature type="transmembrane region" description="Helical; Signal-anchor for type II membrane protein" evidence="3">
    <location>
        <begin position="7"/>
        <end position="29"/>
    </location>
</feature>
<feature type="topological domain" description="Lumenal" evidence="3">
    <location>
        <begin position="30"/>
        <end position="447"/>
    </location>
</feature>
<feature type="active site" description="Proton acceptor" evidence="3">
    <location>
        <position position="291"/>
    </location>
</feature>
<feature type="binding site" evidence="2">
    <location>
        <position position="117"/>
    </location>
    <ligand>
        <name>substrate</name>
    </ligand>
</feature>
<feature type="binding site" evidence="2">
    <location>
        <position position="144"/>
    </location>
    <ligand>
        <name>substrate</name>
    </ligand>
</feature>
<feature type="binding site" evidence="2">
    <location>
        <position position="190"/>
    </location>
    <ligand>
        <name>substrate</name>
    </ligand>
</feature>
<feature type="binding site" evidence="2">
    <location>
        <position position="212"/>
    </location>
    <ligand>
        <name>substrate</name>
    </ligand>
</feature>
<feature type="binding site" evidence="2">
    <location>
        <position position="213"/>
    </location>
    <ligand>
        <name>Mn(2+)</name>
        <dbReference type="ChEBI" id="CHEBI:29035"/>
    </ligand>
</feature>
<feature type="binding site" evidence="2">
    <location>
        <position position="322"/>
    </location>
    <ligand>
        <name>substrate</name>
    </ligand>
</feature>
<feature type="disulfide bond" evidence="2">
    <location>
        <begin position="115"/>
        <end position="145"/>
    </location>
</feature>
<feature type="disulfide bond" evidence="2">
    <location>
        <begin position="239"/>
        <end position="305"/>
    </location>
</feature>